<proteinExistence type="evidence at protein level"/>
<sequence length="533" mass="56628">MLGLAGRCSAAAASAARPALRRAAGPSHGFLPLLLSRGAGPAAAVGARRDHAAQAAPAAKAGSATGRIVAVIGAVVDVQFDEGLPPILNALEVQGRETRLVLEVAQHLGENTVRTIAMDGTEGLVRGQKVLDSGAPIRIPVGPETLGRIMNVIGEPIDERGPITTKQFAAIHAEAPEFVEMSVEQKILVTGIKVVDLLAPYAKGGKIGLFGGAGVGKTVLIMELINNVAKAHGGYSVFAGVGERTREGNDLYHEMIESGVINLKDATSKVALVYGQMNEPPGARARVALTGLTVAEYFRDQEGQDVLLFIDNIFRFTQAGSEVSALLGRIPSAVGYQPTLATDMGTMQERITTTRKGSITSVQAIYVPADDLTDPAPATTFAHLDATTVLSRAIAELGIYPAVDPLDSTSRIMDPNIVGPEHYDVARGVQKILQDYKSLQDIIAILGMDELSEEDKLTVARARKIQRFLSQPFQVAEVFTGHMGKLVPLKETIKGFKQILAGEYDHLPEQAFYMVGPIEEAVAKAEKLAEEHA</sequence>
<evidence type="ECO:0000250" key="1">
    <source>
        <dbReference type="UniProtKB" id="P00829"/>
    </source>
</evidence>
<evidence type="ECO:0000250" key="2">
    <source>
        <dbReference type="UniProtKB" id="P06576"/>
    </source>
</evidence>
<evidence type="ECO:0000250" key="3">
    <source>
        <dbReference type="UniProtKB" id="P19483"/>
    </source>
</evidence>
<evidence type="ECO:0000255" key="4"/>
<evidence type="ECO:0000269" key="5">
    <source>
    </source>
</evidence>
<evidence type="ECO:0000305" key="6"/>
<evidence type="ECO:0000312" key="7">
    <source>
        <dbReference type="EMBL" id="CAG31468.1"/>
    </source>
</evidence>
<reference evidence="6 7" key="1">
    <citation type="journal article" date="2005" name="Genome Biol.">
        <title>Full-length cDNAs from chicken bursal lymphocytes to facilitate gene function analysis.</title>
        <authorList>
            <person name="Caldwell R.B."/>
            <person name="Kierzek A.M."/>
            <person name="Arakawa H."/>
            <person name="Bezzubov Y."/>
            <person name="Zaim J."/>
            <person name="Fiedler P."/>
            <person name="Kutter S."/>
            <person name="Blagodatski A."/>
            <person name="Kostovska D."/>
            <person name="Koter M."/>
            <person name="Plachy J."/>
            <person name="Carninci P."/>
            <person name="Hayashizaki Y."/>
            <person name="Buerstedde J.-M."/>
        </authorList>
    </citation>
    <scope>NUCLEOTIDE SEQUENCE [LARGE SCALE MRNA]</scope>
    <source>
        <strain evidence="7">CB</strain>
        <tissue evidence="7">Bursa of Fabricius</tissue>
    </source>
</reference>
<reference evidence="6" key="2">
    <citation type="journal article" date="2005" name="Proteomics">
        <title>Proteomic analysis of the Gallus gallus embryo at stage-29 of development.</title>
        <authorList>
            <person name="Agudo D."/>
            <person name="Gomez-Esquer F."/>
            <person name="Diaz-Gil G."/>
            <person name="Martinez-Arribas F."/>
            <person name="Delcan J."/>
            <person name="Schneider J."/>
            <person name="Palomar M.A."/>
            <person name="Linares R."/>
        </authorList>
    </citation>
    <scope>IDENTIFICATION</scope>
    <scope>MASS SPECTROMETRY</scope>
    <source>
        <tissue evidence="5">Embryo</tissue>
    </source>
</reference>
<name>ATPB_CHICK</name>
<gene>
    <name evidence="2" type="primary">ATP5F1B</name>
    <name evidence="1" type="synonym">ATP5B</name>
    <name type="ORF">RCJMB04_6l18</name>
</gene>
<comment type="function">
    <text evidence="2 3">Catalytic subunit beta, of the mitochondrial membrane ATP synthase complex (F(1)F(0) ATP synthase or Complex V) that produces ATP from ADP in the presence of a proton gradient across the membrane which is generated by electron transport complexes of the respiratory chain. ATP synthase complex consist of a soluble F(1) head domain - the catalytic core - and a membrane F(1) domain - the membrane proton channel. These two domains are linked by a central stalk rotating inside the F(1) region and a stationary peripheral stalk. During catalysis, ATP synthesis in the catalytic domain of F(1) is coupled via a rotary mechanism of the central stalk subunits to proton translocation (By similarity). In vivo, can only synthesize ATP although its ATP hydrolase activity can be activated artificially in vitro (By similarity). With the subunit alpha (ATP5F1A), forms the catalytic core in the F(1) domain (By similarity).</text>
</comment>
<comment type="catalytic activity">
    <reaction evidence="1">
        <text>ATP + H2O + 4 H(+)(in) = ADP + phosphate + 5 H(+)(out)</text>
        <dbReference type="Rhea" id="RHEA:57720"/>
        <dbReference type="ChEBI" id="CHEBI:15377"/>
        <dbReference type="ChEBI" id="CHEBI:15378"/>
        <dbReference type="ChEBI" id="CHEBI:30616"/>
        <dbReference type="ChEBI" id="CHEBI:43474"/>
        <dbReference type="ChEBI" id="CHEBI:456216"/>
        <dbReference type="EC" id="7.1.2.2"/>
    </reaction>
    <physiologicalReaction direction="right-to-left" evidence="1">
        <dbReference type="Rhea" id="RHEA:57722"/>
    </physiologicalReaction>
</comment>
<comment type="subunit">
    <text evidence="2">Homotrimer. Component of the ATP synthase complex composed at least of ATP5F1A/subunit alpha, ATP5F1B/subunit beta, ATP5MC1/subunit c (homooctomer), MT-ATP6/subunit a, MT-ATP8/subunit 8, ATP5ME/subunit e, ATP5MF/subunit f, ATP5MG/subunit g, ATP5MK/subunit k, ATP5MJ/subunit j, ATP5F1C/subunit gamma, ATP5F1D/subunit delta, ATP5F1E/subunit epsilon, ATP5PF/subunit F6, ATP5PB/subunit b, ATP5PD/subunit d, ATP5PO/subunit OSCP. ATP synthase complex consists of a soluble F(1) head domain (subunits alpha(3) and beta(3)) - the catalytic core - and a membrane F(0) domain - the membrane proton channel (subunits c, a, 8, e, f, g, k and j). These two domains are linked by a central stalk (subunits gamma, delta, and epsilon) rotating inside the F1 region and a stationary peripheral stalk (subunits F6, b, d, and OSCP).</text>
</comment>
<comment type="subcellular location">
    <subcellularLocation>
        <location evidence="1">Mitochondrion inner membrane</location>
        <topology evidence="1">Peripheral membrane protein</topology>
        <orientation evidence="1">Matrix side</orientation>
    </subcellularLocation>
</comment>
<comment type="mass spectrometry" mass="51171.0" error="1.0" method="MALDI" evidence="5"/>
<comment type="similarity">
    <text evidence="4">Belongs to the ATPase alpha/beta chains family.</text>
</comment>
<feature type="transit peptide" description="Mitochondrion" evidence="1">
    <location>
        <begin position="1"/>
        <end position="53"/>
    </location>
</feature>
<feature type="chain" id="PRO_0000223501" description="ATP synthase F(1) complex catalytic subunit beta, mitochondrial">
    <location>
        <begin position="54"/>
        <end position="533"/>
    </location>
</feature>
<feature type="binding site" evidence="1">
    <location>
        <position position="214"/>
    </location>
    <ligand>
        <name>ADP</name>
        <dbReference type="ChEBI" id="CHEBI:456216"/>
    </ligand>
</feature>
<feature type="binding site" evidence="1">
    <location>
        <position position="214"/>
    </location>
    <ligand>
        <name>ATP</name>
        <dbReference type="ChEBI" id="CHEBI:30616"/>
    </ligand>
</feature>
<feature type="binding site" evidence="1">
    <location>
        <position position="214"/>
    </location>
    <ligand>
        <name>phosphate</name>
        <dbReference type="ChEBI" id="CHEBI:43474"/>
    </ligand>
</feature>
<feature type="binding site" evidence="1">
    <location>
        <position position="215"/>
    </location>
    <ligand>
        <name>ADP</name>
        <dbReference type="ChEBI" id="CHEBI:456216"/>
    </ligand>
</feature>
<feature type="binding site" evidence="1">
    <location>
        <position position="215"/>
    </location>
    <ligand>
        <name>phosphate</name>
        <dbReference type="ChEBI" id="CHEBI:43474"/>
    </ligand>
</feature>
<feature type="binding site" evidence="1">
    <location>
        <position position="216"/>
    </location>
    <ligand>
        <name>ADP</name>
        <dbReference type="ChEBI" id="CHEBI:456216"/>
    </ligand>
</feature>
<feature type="binding site" evidence="1">
    <location>
        <position position="216"/>
    </location>
    <ligand>
        <name>ATP</name>
        <dbReference type="ChEBI" id="CHEBI:30616"/>
    </ligand>
</feature>
<feature type="binding site" evidence="1">
    <location>
        <position position="216"/>
    </location>
    <ligand>
        <name>phosphate</name>
        <dbReference type="ChEBI" id="CHEBI:43474"/>
    </ligand>
</feature>
<feature type="binding site" evidence="1">
    <location>
        <position position="217"/>
    </location>
    <ligand>
        <name>ADP</name>
        <dbReference type="ChEBI" id="CHEBI:456216"/>
    </ligand>
</feature>
<feature type="binding site" evidence="1">
    <location>
        <position position="217"/>
    </location>
    <ligand>
        <name>ATP</name>
        <dbReference type="ChEBI" id="CHEBI:30616"/>
    </ligand>
</feature>
<feature type="binding site" evidence="1">
    <location>
        <position position="217"/>
    </location>
    <ligand>
        <name>phosphate</name>
        <dbReference type="ChEBI" id="CHEBI:43474"/>
    </ligand>
</feature>
<feature type="binding site" evidence="1">
    <location>
        <position position="218"/>
    </location>
    <ligand>
        <name>ADP</name>
        <dbReference type="ChEBI" id="CHEBI:456216"/>
    </ligand>
</feature>
<feature type="binding site" evidence="1">
    <location>
        <position position="218"/>
    </location>
    <ligand>
        <name>ATP</name>
        <dbReference type="ChEBI" id="CHEBI:30616"/>
    </ligand>
</feature>
<feature type="binding site" evidence="1">
    <location>
        <position position="218"/>
    </location>
    <ligand>
        <name>Mg(2+)</name>
        <dbReference type="ChEBI" id="CHEBI:18420"/>
        <label>1</label>
        <note>ligand shared between two neighboring subunits</note>
    </ligand>
</feature>
<feature type="binding site" evidence="1">
    <location>
        <position position="218"/>
    </location>
    <ligand>
        <name>phosphate</name>
        <dbReference type="ChEBI" id="CHEBI:43474"/>
    </ligand>
</feature>
<feature type="binding site" evidence="1">
    <location>
        <position position="219"/>
    </location>
    <ligand>
        <name>ADP</name>
        <dbReference type="ChEBI" id="CHEBI:456216"/>
    </ligand>
</feature>
<feature type="binding site" evidence="1">
    <location>
        <position position="219"/>
    </location>
    <ligand>
        <name>ATP</name>
        <dbReference type="ChEBI" id="CHEBI:30616"/>
    </ligand>
</feature>
<feature type="binding site" evidence="1">
    <location>
        <position position="243"/>
    </location>
    <ligand>
        <name>Mg(2+)</name>
        <dbReference type="ChEBI" id="CHEBI:18420"/>
        <label>2</label>
        <note>ligand shared between two neighboring subunits</note>
    </ligand>
</feature>
<feature type="binding site" evidence="1">
    <location>
        <position position="244"/>
    </location>
    <ligand>
        <name>ATP</name>
        <dbReference type="ChEBI" id="CHEBI:30616"/>
    </ligand>
</feature>
<dbReference type="EC" id="7.1.2.2" evidence="2"/>
<dbReference type="EMBL" id="AJ719809">
    <property type="protein sequence ID" value="CAG31468.1"/>
    <property type="molecule type" value="mRNA"/>
</dbReference>
<dbReference type="RefSeq" id="NP_001026562.2">
    <property type="nucleotide sequence ID" value="NM_001031391.2"/>
</dbReference>
<dbReference type="SMR" id="Q5ZLC5"/>
<dbReference type="BioGRID" id="686196">
    <property type="interactions" value="2"/>
</dbReference>
<dbReference type="FunCoup" id="Q5ZLC5">
    <property type="interactions" value="2171"/>
</dbReference>
<dbReference type="IntAct" id="Q5ZLC5">
    <property type="interactions" value="1"/>
</dbReference>
<dbReference type="STRING" id="9031.ENSGALP00000063712"/>
<dbReference type="PaxDb" id="9031-ENSGALP00000035339"/>
<dbReference type="GeneID" id="426673"/>
<dbReference type="KEGG" id="gga:426673"/>
<dbReference type="CTD" id="426673"/>
<dbReference type="VEuPathDB" id="HostDB:geneid_426673"/>
<dbReference type="eggNOG" id="KOG1350">
    <property type="taxonomic scope" value="Eukaryota"/>
</dbReference>
<dbReference type="InParanoid" id="Q5ZLC5"/>
<dbReference type="OrthoDB" id="14523at2759"/>
<dbReference type="PhylomeDB" id="Q5ZLC5"/>
<dbReference type="PRO" id="PR:Q5ZLC5"/>
<dbReference type="Proteomes" id="UP000000539">
    <property type="component" value="Unassembled WGS sequence"/>
</dbReference>
<dbReference type="GO" id="GO:0005743">
    <property type="term" value="C:mitochondrial inner membrane"/>
    <property type="evidence" value="ECO:0007669"/>
    <property type="project" value="UniProtKB-SubCell"/>
</dbReference>
<dbReference type="GO" id="GO:0005739">
    <property type="term" value="C:mitochondrion"/>
    <property type="evidence" value="ECO:0000250"/>
    <property type="project" value="UniProtKB"/>
</dbReference>
<dbReference type="GO" id="GO:0045259">
    <property type="term" value="C:proton-transporting ATP synthase complex"/>
    <property type="evidence" value="ECO:0000250"/>
    <property type="project" value="UniProtKB"/>
</dbReference>
<dbReference type="GO" id="GO:0005524">
    <property type="term" value="F:ATP binding"/>
    <property type="evidence" value="ECO:0007669"/>
    <property type="project" value="UniProtKB-KW"/>
</dbReference>
<dbReference type="GO" id="GO:0016887">
    <property type="term" value="F:ATP hydrolysis activity"/>
    <property type="evidence" value="ECO:0007669"/>
    <property type="project" value="InterPro"/>
</dbReference>
<dbReference type="GO" id="GO:0046933">
    <property type="term" value="F:proton-transporting ATP synthase activity, rotational mechanism"/>
    <property type="evidence" value="ECO:0000250"/>
    <property type="project" value="UniProtKB"/>
</dbReference>
<dbReference type="GO" id="GO:0001525">
    <property type="term" value="P:angiogenesis"/>
    <property type="evidence" value="ECO:0000315"/>
    <property type="project" value="UniProtKB"/>
</dbReference>
<dbReference type="GO" id="GO:0015986">
    <property type="term" value="P:proton motive force-driven ATP synthesis"/>
    <property type="evidence" value="ECO:0000250"/>
    <property type="project" value="UniProtKB"/>
</dbReference>
<dbReference type="GO" id="GO:0042776">
    <property type="term" value="P:proton motive force-driven mitochondrial ATP synthesis"/>
    <property type="evidence" value="ECO:0000318"/>
    <property type="project" value="GO_Central"/>
</dbReference>
<dbReference type="CDD" id="cd18110">
    <property type="entry name" value="ATP-synt_F1_beta_C"/>
    <property type="match status" value="1"/>
</dbReference>
<dbReference type="CDD" id="cd18115">
    <property type="entry name" value="ATP-synt_F1_beta_N"/>
    <property type="match status" value="1"/>
</dbReference>
<dbReference type="CDD" id="cd01133">
    <property type="entry name" value="F1-ATPase_beta_CD"/>
    <property type="match status" value="1"/>
</dbReference>
<dbReference type="FunFam" id="1.10.1140.10:FF:000001">
    <property type="entry name" value="ATP synthase subunit beta"/>
    <property type="match status" value="1"/>
</dbReference>
<dbReference type="FunFam" id="2.40.10.170:FF:000004">
    <property type="entry name" value="ATP synthase subunit beta"/>
    <property type="match status" value="1"/>
</dbReference>
<dbReference type="FunFam" id="3.40.50.12240:FF:000006">
    <property type="entry name" value="ATP synthase subunit beta"/>
    <property type="match status" value="1"/>
</dbReference>
<dbReference type="FunFam" id="3.40.50.300:FF:000026">
    <property type="entry name" value="ATP synthase subunit beta"/>
    <property type="match status" value="1"/>
</dbReference>
<dbReference type="Gene3D" id="2.40.10.170">
    <property type="match status" value="1"/>
</dbReference>
<dbReference type="Gene3D" id="1.10.1140.10">
    <property type="entry name" value="Bovine Mitochondrial F1-atpase, Atp Synthase Beta Chain, Chain D, domain 3"/>
    <property type="match status" value="1"/>
</dbReference>
<dbReference type="Gene3D" id="3.40.50.300">
    <property type="entry name" value="P-loop containing nucleotide triphosphate hydrolases"/>
    <property type="match status" value="1"/>
</dbReference>
<dbReference type="HAMAP" id="MF_01347">
    <property type="entry name" value="ATP_synth_beta_bact"/>
    <property type="match status" value="1"/>
</dbReference>
<dbReference type="InterPro" id="IPR003593">
    <property type="entry name" value="AAA+_ATPase"/>
</dbReference>
<dbReference type="InterPro" id="IPR055190">
    <property type="entry name" value="ATP-synt_VA_C"/>
</dbReference>
<dbReference type="InterPro" id="IPR005722">
    <property type="entry name" value="ATP_synth_F1_bsu"/>
</dbReference>
<dbReference type="InterPro" id="IPR020003">
    <property type="entry name" value="ATPase_a/bsu_AS"/>
</dbReference>
<dbReference type="InterPro" id="IPR050053">
    <property type="entry name" value="ATPase_alpha/beta_chains"/>
</dbReference>
<dbReference type="InterPro" id="IPR004100">
    <property type="entry name" value="ATPase_F1/V1/A1_a/bsu_N"/>
</dbReference>
<dbReference type="InterPro" id="IPR036121">
    <property type="entry name" value="ATPase_F1/V1/A1_a/bsu_N_sf"/>
</dbReference>
<dbReference type="InterPro" id="IPR000194">
    <property type="entry name" value="ATPase_F1/V1/A1_a/bsu_nucl-bd"/>
</dbReference>
<dbReference type="InterPro" id="IPR024034">
    <property type="entry name" value="ATPase_F1/V1_b/a_C"/>
</dbReference>
<dbReference type="InterPro" id="IPR027417">
    <property type="entry name" value="P-loop_NTPase"/>
</dbReference>
<dbReference type="NCBIfam" id="TIGR01039">
    <property type="entry name" value="atpD"/>
    <property type="match status" value="1"/>
</dbReference>
<dbReference type="PANTHER" id="PTHR15184">
    <property type="entry name" value="ATP SYNTHASE"/>
    <property type="match status" value="1"/>
</dbReference>
<dbReference type="PANTHER" id="PTHR15184:SF71">
    <property type="entry name" value="ATP SYNTHASE SUBUNIT BETA, MITOCHONDRIAL"/>
    <property type="match status" value="1"/>
</dbReference>
<dbReference type="Pfam" id="PF00006">
    <property type="entry name" value="ATP-synt_ab"/>
    <property type="match status" value="1"/>
</dbReference>
<dbReference type="Pfam" id="PF02874">
    <property type="entry name" value="ATP-synt_ab_N"/>
    <property type="match status" value="1"/>
</dbReference>
<dbReference type="Pfam" id="PF22919">
    <property type="entry name" value="ATP-synt_VA_C"/>
    <property type="match status" value="1"/>
</dbReference>
<dbReference type="PIRSF" id="PIRSF039072">
    <property type="entry name" value="ATPase_subunit_beta"/>
    <property type="match status" value="1"/>
</dbReference>
<dbReference type="SMART" id="SM00382">
    <property type="entry name" value="AAA"/>
    <property type="match status" value="1"/>
</dbReference>
<dbReference type="SUPFAM" id="SSF47917">
    <property type="entry name" value="C-terminal domain of alpha and beta subunits of F1 ATP synthase"/>
    <property type="match status" value="1"/>
</dbReference>
<dbReference type="SUPFAM" id="SSF50615">
    <property type="entry name" value="N-terminal domain of alpha and beta subunits of F1 ATP synthase"/>
    <property type="match status" value="1"/>
</dbReference>
<dbReference type="SUPFAM" id="SSF52540">
    <property type="entry name" value="P-loop containing nucleoside triphosphate hydrolases"/>
    <property type="match status" value="1"/>
</dbReference>
<dbReference type="PROSITE" id="PS00152">
    <property type="entry name" value="ATPASE_ALPHA_BETA"/>
    <property type="match status" value="1"/>
</dbReference>
<keyword id="KW-0066">ATP synthesis</keyword>
<keyword id="KW-0067">ATP-binding</keyword>
<keyword id="KW-0139">CF(1)</keyword>
<keyword id="KW-0375">Hydrogen ion transport</keyword>
<keyword id="KW-0406">Ion transport</keyword>
<keyword id="KW-0460">Magnesium</keyword>
<keyword id="KW-0472">Membrane</keyword>
<keyword id="KW-0479">Metal-binding</keyword>
<keyword id="KW-0496">Mitochondrion</keyword>
<keyword id="KW-0999">Mitochondrion inner membrane</keyword>
<keyword id="KW-0547">Nucleotide-binding</keyword>
<keyword id="KW-1185">Reference proteome</keyword>
<keyword id="KW-0809">Transit peptide</keyword>
<keyword id="KW-1278">Translocase</keyword>
<keyword id="KW-0813">Transport</keyword>
<protein>
    <recommendedName>
        <fullName evidence="2">ATP synthase F(1) complex catalytic subunit beta, mitochondrial</fullName>
        <ecNumber evidence="2">7.1.2.2</ecNumber>
    </recommendedName>
    <alternativeName>
        <fullName evidence="2">ATP synthase F1 subunit beta</fullName>
    </alternativeName>
</protein>
<accession>Q5ZLC5</accession>
<accession>P84168</accession>
<organism>
    <name type="scientific">Gallus gallus</name>
    <name type="common">Chicken</name>
    <dbReference type="NCBI Taxonomy" id="9031"/>
    <lineage>
        <taxon>Eukaryota</taxon>
        <taxon>Metazoa</taxon>
        <taxon>Chordata</taxon>
        <taxon>Craniata</taxon>
        <taxon>Vertebrata</taxon>
        <taxon>Euteleostomi</taxon>
        <taxon>Archelosauria</taxon>
        <taxon>Archosauria</taxon>
        <taxon>Dinosauria</taxon>
        <taxon>Saurischia</taxon>
        <taxon>Theropoda</taxon>
        <taxon>Coelurosauria</taxon>
        <taxon>Aves</taxon>
        <taxon>Neognathae</taxon>
        <taxon>Galloanserae</taxon>
        <taxon>Galliformes</taxon>
        <taxon>Phasianidae</taxon>
        <taxon>Phasianinae</taxon>
        <taxon>Gallus</taxon>
    </lineage>
</organism>